<feature type="chain" id="PRO_0000174857" description="Co-chaperonin GroES">
    <location>
        <begin position="1"/>
        <end position="94"/>
    </location>
</feature>
<gene>
    <name evidence="1" type="primary">groES</name>
    <name evidence="1" type="synonym">groS</name>
</gene>
<accession>Q8KJ15</accession>
<proteinExistence type="inferred from homology"/>
<protein>
    <recommendedName>
        <fullName evidence="1">Co-chaperonin GroES</fullName>
    </recommendedName>
    <alternativeName>
        <fullName evidence="1">10 kDa chaperonin</fullName>
    </alternativeName>
    <alternativeName>
        <fullName evidence="1">Chaperonin-10</fullName>
        <shortName evidence="1">Cpn10</shortName>
    </alternativeName>
</protein>
<dbReference type="EMBL" id="AF389514">
    <property type="protein sequence ID" value="AAM73641.1"/>
    <property type="molecule type" value="Genomic_DNA"/>
</dbReference>
<dbReference type="SMR" id="Q8KJ15"/>
<dbReference type="GO" id="GO:0005737">
    <property type="term" value="C:cytoplasm"/>
    <property type="evidence" value="ECO:0007669"/>
    <property type="project" value="UniProtKB-SubCell"/>
</dbReference>
<dbReference type="GO" id="GO:0005524">
    <property type="term" value="F:ATP binding"/>
    <property type="evidence" value="ECO:0007669"/>
    <property type="project" value="InterPro"/>
</dbReference>
<dbReference type="GO" id="GO:0046872">
    <property type="term" value="F:metal ion binding"/>
    <property type="evidence" value="ECO:0007669"/>
    <property type="project" value="TreeGrafter"/>
</dbReference>
<dbReference type="GO" id="GO:0044183">
    <property type="term" value="F:protein folding chaperone"/>
    <property type="evidence" value="ECO:0007669"/>
    <property type="project" value="InterPro"/>
</dbReference>
<dbReference type="GO" id="GO:0051087">
    <property type="term" value="F:protein-folding chaperone binding"/>
    <property type="evidence" value="ECO:0007669"/>
    <property type="project" value="TreeGrafter"/>
</dbReference>
<dbReference type="GO" id="GO:0051082">
    <property type="term" value="F:unfolded protein binding"/>
    <property type="evidence" value="ECO:0007669"/>
    <property type="project" value="TreeGrafter"/>
</dbReference>
<dbReference type="GO" id="GO:0051085">
    <property type="term" value="P:chaperone cofactor-dependent protein refolding"/>
    <property type="evidence" value="ECO:0007669"/>
    <property type="project" value="TreeGrafter"/>
</dbReference>
<dbReference type="CDD" id="cd00320">
    <property type="entry name" value="cpn10"/>
    <property type="match status" value="1"/>
</dbReference>
<dbReference type="FunFam" id="2.30.33.40:FF:000007">
    <property type="entry name" value="10 kDa chaperonin"/>
    <property type="match status" value="1"/>
</dbReference>
<dbReference type="Gene3D" id="2.30.33.40">
    <property type="entry name" value="GroES chaperonin"/>
    <property type="match status" value="1"/>
</dbReference>
<dbReference type="HAMAP" id="MF_00580">
    <property type="entry name" value="CH10"/>
    <property type="match status" value="1"/>
</dbReference>
<dbReference type="InterPro" id="IPR020818">
    <property type="entry name" value="Chaperonin_GroES"/>
</dbReference>
<dbReference type="InterPro" id="IPR037124">
    <property type="entry name" value="Chaperonin_GroES_sf"/>
</dbReference>
<dbReference type="InterPro" id="IPR018369">
    <property type="entry name" value="Chaprnonin_Cpn10_CS"/>
</dbReference>
<dbReference type="InterPro" id="IPR011032">
    <property type="entry name" value="GroES-like_sf"/>
</dbReference>
<dbReference type="NCBIfam" id="NF001528">
    <property type="entry name" value="PRK00364.1-4"/>
    <property type="match status" value="1"/>
</dbReference>
<dbReference type="PANTHER" id="PTHR10772">
    <property type="entry name" value="10 KDA HEAT SHOCK PROTEIN"/>
    <property type="match status" value="1"/>
</dbReference>
<dbReference type="PANTHER" id="PTHR10772:SF58">
    <property type="entry name" value="CO-CHAPERONIN GROES"/>
    <property type="match status" value="1"/>
</dbReference>
<dbReference type="Pfam" id="PF00166">
    <property type="entry name" value="Cpn10"/>
    <property type="match status" value="1"/>
</dbReference>
<dbReference type="PRINTS" id="PR00297">
    <property type="entry name" value="CHAPERONIN10"/>
</dbReference>
<dbReference type="SMART" id="SM00883">
    <property type="entry name" value="Cpn10"/>
    <property type="match status" value="1"/>
</dbReference>
<dbReference type="SUPFAM" id="SSF50129">
    <property type="entry name" value="GroES-like"/>
    <property type="match status" value="1"/>
</dbReference>
<dbReference type="PROSITE" id="PS00681">
    <property type="entry name" value="CHAPERONINS_CPN10"/>
    <property type="match status" value="1"/>
</dbReference>
<name>CH10_STREI</name>
<keyword id="KW-0143">Chaperone</keyword>
<keyword id="KW-0963">Cytoplasm</keyword>
<sequence>MLKPLGDRVVLKVEEEKEQTVGGFVLAGASKERTQVATVVAVGDGARTLTGELVAPSVAAGDKVIIENGVGIEVKDDDNTVTIVREADILAILA</sequence>
<comment type="function">
    <text evidence="1">Together with the chaperonin GroEL, plays an essential role in assisting protein folding. The GroEL-GroES system forms a nano-cage that allows encapsulation of the non-native substrate proteins and provides a physical environment optimized to promote and accelerate protein folding. GroES binds to the apical surface of the GroEL ring, thereby capping the opening of the GroEL channel.</text>
</comment>
<comment type="subunit">
    <text evidence="1">Heptamer of 7 subunits arranged in a ring. Interacts with the chaperonin GroEL.</text>
</comment>
<comment type="subcellular location">
    <subcellularLocation>
        <location evidence="1">Cytoplasm</location>
    </subcellularLocation>
</comment>
<comment type="similarity">
    <text evidence="1">Belongs to the GroES chaperonin family.</text>
</comment>
<organism>
    <name type="scientific">Streptococcus equinus</name>
    <name type="common">Streptococcus bovis</name>
    <dbReference type="NCBI Taxonomy" id="1335"/>
    <lineage>
        <taxon>Bacteria</taxon>
        <taxon>Bacillati</taxon>
        <taxon>Bacillota</taxon>
        <taxon>Bacilli</taxon>
        <taxon>Lactobacillales</taxon>
        <taxon>Streptococcaceae</taxon>
        <taxon>Streptococcus</taxon>
    </lineage>
</organism>
<reference key="1">
    <citation type="submission" date="2001-06" db="EMBL/GenBank/DDBJ databases">
        <title>The groESL genes of Streptococcus bovis.</title>
        <authorList>
            <person name="Teng L.-J."/>
        </authorList>
    </citation>
    <scope>NUCLEOTIDE SEQUENCE [GENOMIC DNA]</scope>
</reference>
<evidence type="ECO:0000255" key="1">
    <source>
        <dbReference type="HAMAP-Rule" id="MF_00580"/>
    </source>
</evidence>